<accession>Q5LRY0</accession>
<proteinExistence type="inferred from homology"/>
<gene>
    <name evidence="1" type="primary">rplU</name>
    <name type="ordered locus">SPO1990</name>
</gene>
<name>RL21_RUEPO</name>
<keyword id="KW-1185">Reference proteome</keyword>
<keyword id="KW-0687">Ribonucleoprotein</keyword>
<keyword id="KW-0689">Ribosomal protein</keyword>
<keyword id="KW-0694">RNA-binding</keyword>
<keyword id="KW-0699">rRNA-binding</keyword>
<reference key="1">
    <citation type="journal article" date="2004" name="Nature">
        <title>Genome sequence of Silicibacter pomeroyi reveals adaptations to the marine environment.</title>
        <authorList>
            <person name="Moran M.A."/>
            <person name="Buchan A."/>
            <person name="Gonzalez J.M."/>
            <person name="Heidelberg J.F."/>
            <person name="Whitman W.B."/>
            <person name="Kiene R.P."/>
            <person name="Henriksen J.R."/>
            <person name="King G.M."/>
            <person name="Belas R."/>
            <person name="Fuqua C."/>
            <person name="Brinkac L.M."/>
            <person name="Lewis M."/>
            <person name="Johri S."/>
            <person name="Weaver B."/>
            <person name="Pai G."/>
            <person name="Eisen J.A."/>
            <person name="Rahe E."/>
            <person name="Sheldon W.M."/>
            <person name="Ye W."/>
            <person name="Miller T.R."/>
            <person name="Carlton J."/>
            <person name="Rasko D.A."/>
            <person name="Paulsen I.T."/>
            <person name="Ren Q."/>
            <person name="Daugherty S.C."/>
            <person name="DeBoy R.T."/>
            <person name="Dodson R.J."/>
            <person name="Durkin A.S."/>
            <person name="Madupu R."/>
            <person name="Nelson W.C."/>
            <person name="Sullivan S.A."/>
            <person name="Rosovitz M.J."/>
            <person name="Haft D.H."/>
            <person name="Selengut J."/>
            <person name="Ward N."/>
        </authorList>
    </citation>
    <scope>NUCLEOTIDE SEQUENCE [LARGE SCALE GENOMIC DNA]</scope>
    <source>
        <strain>ATCC 700808 / DSM 15171 / DSS-3</strain>
    </source>
</reference>
<reference key="2">
    <citation type="journal article" date="2014" name="Stand. Genomic Sci.">
        <title>An updated genome annotation for the model marine bacterium Ruegeria pomeroyi DSS-3.</title>
        <authorList>
            <person name="Rivers A.R."/>
            <person name="Smith C.B."/>
            <person name="Moran M.A."/>
        </authorList>
    </citation>
    <scope>GENOME REANNOTATION</scope>
    <source>
        <strain>ATCC 700808 / DSM 15171 / DSS-3</strain>
    </source>
</reference>
<comment type="function">
    <text evidence="1">This protein binds to 23S rRNA in the presence of protein L20.</text>
</comment>
<comment type="subunit">
    <text evidence="1">Part of the 50S ribosomal subunit. Contacts protein L20.</text>
</comment>
<comment type="similarity">
    <text evidence="1">Belongs to the bacterial ribosomal protein bL21 family.</text>
</comment>
<dbReference type="EMBL" id="CP000031">
    <property type="protein sequence ID" value="AAV95266.1"/>
    <property type="molecule type" value="Genomic_DNA"/>
</dbReference>
<dbReference type="RefSeq" id="WP_011047721.1">
    <property type="nucleotide sequence ID" value="NC_003911.12"/>
</dbReference>
<dbReference type="SMR" id="Q5LRY0"/>
<dbReference type="STRING" id="246200.SPO1990"/>
<dbReference type="PaxDb" id="246200-SPO1990"/>
<dbReference type="KEGG" id="sil:SPO1990"/>
<dbReference type="eggNOG" id="COG0261">
    <property type="taxonomic scope" value="Bacteria"/>
</dbReference>
<dbReference type="eggNOG" id="COG3743">
    <property type="taxonomic scope" value="Bacteria"/>
</dbReference>
<dbReference type="HOGENOM" id="CLU_061463_1_0_5"/>
<dbReference type="OrthoDB" id="9813334at2"/>
<dbReference type="Proteomes" id="UP000001023">
    <property type="component" value="Chromosome"/>
</dbReference>
<dbReference type="GO" id="GO:0005737">
    <property type="term" value="C:cytoplasm"/>
    <property type="evidence" value="ECO:0007669"/>
    <property type="project" value="UniProtKB-ARBA"/>
</dbReference>
<dbReference type="GO" id="GO:1990904">
    <property type="term" value="C:ribonucleoprotein complex"/>
    <property type="evidence" value="ECO:0007669"/>
    <property type="project" value="UniProtKB-KW"/>
</dbReference>
<dbReference type="GO" id="GO:0005840">
    <property type="term" value="C:ribosome"/>
    <property type="evidence" value="ECO:0007669"/>
    <property type="project" value="UniProtKB-KW"/>
</dbReference>
<dbReference type="GO" id="GO:0000166">
    <property type="term" value="F:nucleotide binding"/>
    <property type="evidence" value="ECO:0007669"/>
    <property type="project" value="InterPro"/>
</dbReference>
<dbReference type="GO" id="GO:0019843">
    <property type="term" value="F:rRNA binding"/>
    <property type="evidence" value="ECO:0007669"/>
    <property type="project" value="UniProtKB-UniRule"/>
</dbReference>
<dbReference type="GO" id="GO:0003735">
    <property type="term" value="F:structural constituent of ribosome"/>
    <property type="evidence" value="ECO:0007669"/>
    <property type="project" value="InterPro"/>
</dbReference>
<dbReference type="GO" id="GO:0006412">
    <property type="term" value="P:translation"/>
    <property type="evidence" value="ECO:0007669"/>
    <property type="project" value="UniProtKB-UniRule"/>
</dbReference>
<dbReference type="Gene3D" id="1.10.150.20">
    <property type="entry name" value="5' to 3' exonuclease, C-terminal subdomain"/>
    <property type="match status" value="1"/>
</dbReference>
<dbReference type="HAMAP" id="MF_01363">
    <property type="entry name" value="Ribosomal_bL21"/>
    <property type="match status" value="1"/>
</dbReference>
<dbReference type="InterPro" id="IPR028909">
    <property type="entry name" value="bL21-like"/>
</dbReference>
<dbReference type="InterPro" id="IPR036164">
    <property type="entry name" value="bL21-like_sf"/>
</dbReference>
<dbReference type="InterPro" id="IPR010995">
    <property type="entry name" value="DNA_repair_Rad51/TF_NusA_a-hlx"/>
</dbReference>
<dbReference type="InterPro" id="IPR001787">
    <property type="entry name" value="Ribosomal_bL21"/>
</dbReference>
<dbReference type="NCBIfam" id="TIGR00061">
    <property type="entry name" value="L21"/>
    <property type="match status" value="1"/>
</dbReference>
<dbReference type="NCBIfam" id="NF008915">
    <property type="entry name" value="PRK12278.1-1"/>
    <property type="match status" value="1"/>
</dbReference>
<dbReference type="PANTHER" id="PTHR21349">
    <property type="entry name" value="50S RIBOSOMAL PROTEIN L21"/>
    <property type="match status" value="1"/>
</dbReference>
<dbReference type="PANTHER" id="PTHR21349:SF0">
    <property type="entry name" value="LARGE RIBOSOMAL SUBUNIT PROTEIN BL21M"/>
    <property type="match status" value="1"/>
</dbReference>
<dbReference type="Pfam" id="PF14520">
    <property type="entry name" value="HHH_5"/>
    <property type="match status" value="1"/>
</dbReference>
<dbReference type="Pfam" id="PF00829">
    <property type="entry name" value="Ribosomal_L21p"/>
    <property type="match status" value="1"/>
</dbReference>
<dbReference type="SUPFAM" id="SSF141091">
    <property type="entry name" value="L21p-like"/>
    <property type="match status" value="1"/>
</dbReference>
<dbReference type="SUPFAM" id="SSF47794">
    <property type="entry name" value="Rad51 N-terminal domain-like"/>
    <property type="match status" value="1"/>
</dbReference>
<protein>
    <recommendedName>
        <fullName evidence="1">Large ribosomal subunit protein bL21</fullName>
    </recommendedName>
    <alternativeName>
        <fullName evidence="2">50S ribosomal protein L21</fullName>
    </alternativeName>
</protein>
<feature type="chain" id="PRO_0000270735" description="Large ribosomal subunit protein bL21">
    <location>
        <begin position="1"/>
        <end position="193"/>
    </location>
</feature>
<organism>
    <name type="scientific">Ruegeria pomeroyi (strain ATCC 700808 / DSM 15171 / DSS-3)</name>
    <name type="common">Silicibacter pomeroyi</name>
    <dbReference type="NCBI Taxonomy" id="246200"/>
    <lineage>
        <taxon>Bacteria</taxon>
        <taxon>Pseudomonadati</taxon>
        <taxon>Pseudomonadota</taxon>
        <taxon>Alphaproteobacteria</taxon>
        <taxon>Rhodobacterales</taxon>
        <taxon>Roseobacteraceae</taxon>
        <taxon>Ruegeria</taxon>
    </lineage>
</organism>
<evidence type="ECO:0000255" key="1">
    <source>
        <dbReference type="HAMAP-Rule" id="MF_01363"/>
    </source>
</evidence>
<evidence type="ECO:0000305" key="2"/>
<sequence>MFAVLKTGGKQYKVQAGDVLRVEKLAADAGEKVQFNDVLMLGGDAPVVGAPLVDGAAVQAEVIDQIKGEKLIHFVKRRRKHSSQRTKGHRQKLTLVRITEILTSGADKTGVKAATGQAAAGAAAPAAAAPAAAGSDDLTKITGVGPAAAKKLVEAGIGSFAALAALSDEQIAAIDAVKVKPEWVEQAKELAQG</sequence>